<name>CCS1_EMIHU</name>
<proteinExistence type="inferred from homology"/>
<keyword id="KW-0150">Chloroplast</keyword>
<keyword id="KW-0201">Cytochrome c-type biogenesis</keyword>
<keyword id="KW-0472">Membrane</keyword>
<keyword id="KW-0934">Plastid</keyword>
<keyword id="KW-0793">Thylakoid</keyword>
<keyword id="KW-0812">Transmembrane</keyword>
<keyword id="KW-1133">Transmembrane helix</keyword>
<accession>Q4G3C0</accession>
<sequence>MVFSTKLYTTKLLKKLADLRLAIWLLASIGILIALGTFIEQDQPLAFYQENYPTTAPILGFVDWKFITSLNLNTLYSNIWFFGIVGFFASSLLACTYTTQIPALKKFRLWEFITNFKSLRKFQLKRQLPRNLASTSVYQLYGKNYHVFRQGKKNYAYSGLLGRVGPILVHFSILFVLFGSACGALGGYTVQEIVPRGEIFHLQNLVKSGNLSKIPQYLSWRVNDFWITYTEEAKVNQFYSDLSILDVKGQEVKRKIIFVNEPLVYNGVSVYQTDWDILGLKLKLNDQQTIQVPLNKISKSGRNFWLGSVFLDGNSKQKITILLNDLTGNIYVYDNAGLLVATTKLGQLVVFPEDQSLRFQEFLTTTGLQLKEDPGLRLIYLSFFLVMVSIYISFLSYSQIWGFEKTDEFILAGKSNRAVLAFQEDFKKDVKEILNTLKFN</sequence>
<gene>
    <name evidence="1" type="primary">ccs1</name>
</gene>
<reference key="1">
    <citation type="journal article" date="2005" name="DNA Res.">
        <title>The complete plastid genome sequence of the haptophyte Emiliania huxleyi: a comparison to other plastid genomes.</title>
        <authorList>
            <person name="Sanchez-Puerta M.V."/>
            <person name="Bachvaroff T.R."/>
            <person name="Delwiche C.F."/>
        </authorList>
    </citation>
    <scope>NUCLEOTIDE SEQUENCE [LARGE SCALE GENOMIC DNA]</scope>
    <source>
        <strain>CCMP373 / CSIRO-CS-57 / BT6</strain>
    </source>
</reference>
<dbReference type="EMBL" id="AY741371">
    <property type="protein sequence ID" value="AAX13846.1"/>
    <property type="molecule type" value="Genomic_DNA"/>
</dbReference>
<dbReference type="RefSeq" id="YP_277347.1">
    <property type="nucleotide sequence ID" value="NC_007288.1"/>
</dbReference>
<dbReference type="STRING" id="2903.Q4G3C0"/>
<dbReference type="GeneID" id="3562419"/>
<dbReference type="GO" id="GO:0009535">
    <property type="term" value="C:chloroplast thylakoid membrane"/>
    <property type="evidence" value="ECO:0007669"/>
    <property type="project" value="UniProtKB-SubCell"/>
</dbReference>
<dbReference type="GO" id="GO:0017004">
    <property type="term" value="P:cytochrome complex assembly"/>
    <property type="evidence" value="ECO:0007669"/>
    <property type="project" value="UniProtKB-UniRule"/>
</dbReference>
<dbReference type="HAMAP" id="MF_01392">
    <property type="entry name" value="CytC_Ccs1"/>
    <property type="match status" value="1"/>
</dbReference>
<dbReference type="InterPro" id="IPR023494">
    <property type="entry name" value="Cyt_c_bgen_Ccs1/CcsB/ResB"/>
</dbReference>
<dbReference type="InterPro" id="IPR007816">
    <property type="entry name" value="ResB-like_domain"/>
</dbReference>
<dbReference type="PANTHER" id="PTHR31566">
    <property type="entry name" value="CYTOCHROME C BIOGENESIS PROTEIN CCS1, CHLOROPLASTIC"/>
    <property type="match status" value="1"/>
</dbReference>
<dbReference type="PANTHER" id="PTHR31566:SF0">
    <property type="entry name" value="CYTOCHROME C BIOGENESIS PROTEIN CCS1, CHLOROPLASTIC"/>
    <property type="match status" value="1"/>
</dbReference>
<dbReference type="Pfam" id="PF05140">
    <property type="entry name" value="ResB"/>
    <property type="match status" value="1"/>
</dbReference>
<organism>
    <name type="scientific">Emiliania huxleyi</name>
    <name type="common">Coccolithophore</name>
    <name type="synonym">Pontosphaera huxleyi</name>
    <dbReference type="NCBI Taxonomy" id="2903"/>
    <lineage>
        <taxon>Eukaryota</taxon>
        <taxon>Haptista</taxon>
        <taxon>Haptophyta</taxon>
        <taxon>Prymnesiophyceae</taxon>
        <taxon>Isochrysidales</taxon>
        <taxon>Noelaerhabdaceae</taxon>
        <taxon>Emiliania</taxon>
    </lineage>
</organism>
<geneLocation type="chloroplast"/>
<feature type="chain" id="PRO_0000363642" description="Cytochrome c biogenesis protein Ccs1">
    <location>
        <begin position="1"/>
        <end position="440"/>
    </location>
</feature>
<feature type="transmembrane region" description="Helical" evidence="1">
    <location>
        <begin position="19"/>
        <end position="39"/>
    </location>
</feature>
<feature type="transmembrane region" description="Helical" evidence="1">
    <location>
        <begin position="78"/>
        <end position="98"/>
    </location>
</feature>
<feature type="transmembrane region" description="Helical" evidence="1">
    <location>
        <begin position="164"/>
        <end position="184"/>
    </location>
</feature>
<protein>
    <recommendedName>
        <fullName evidence="1">Cytochrome c biogenesis protein Ccs1</fullName>
    </recommendedName>
</protein>
<evidence type="ECO:0000255" key="1">
    <source>
        <dbReference type="HAMAP-Rule" id="MF_01392"/>
    </source>
</evidence>
<comment type="function">
    <text evidence="1">Required during biogenesis of c-type cytochromes (cytochrome c6 and cytochrome f) at the step of heme attachment.</text>
</comment>
<comment type="subunit">
    <text evidence="1">May interact with CcsA.</text>
</comment>
<comment type="subcellular location">
    <subcellularLocation>
        <location evidence="1">Plastid</location>
        <location evidence="1">Chloroplast thylakoid membrane</location>
        <topology evidence="1">Multi-pass membrane protein</topology>
    </subcellularLocation>
</comment>
<comment type="similarity">
    <text evidence="1">Belongs to the Ccs1/CcsB family.</text>
</comment>